<feature type="chain" id="PRO_0000121785" description="tRNA pseudouridine synthase B">
    <location>
        <begin position="1"/>
        <end position="307"/>
    </location>
</feature>
<feature type="active site" description="Nucleophile" evidence="1">
    <location>
        <position position="38"/>
    </location>
</feature>
<evidence type="ECO:0000255" key="1">
    <source>
        <dbReference type="HAMAP-Rule" id="MF_01080"/>
    </source>
</evidence>
<evidence type="ECO:0000305" key="2"/>
<proteinExistence type="inferred from homology"/>
<comment type="function">
    <text evidence="1">Responsible for synthesis of pseudouridine from uracil-55 in the psi GC loop of transfer RNAs.</text>
</comment>
<comment type="catalytic activity">
    <reaction evidence="1">
        <text>uridine(55) in tRNA = pseudouridine(55) in tRNA</text>
        <dbReference type="Rhea" id="RHEA:42532"/>
        <dbReference type="Rhea" id="RHEA-COMP:10101"/>
        <dbReference type="Rhea" id="RHEA-COMP:10102"/>
        <dbReference type="ChEBI" id="CHEBI:65314"/>
        <dbReference type="ChEBI" id="CHEBI:65315"/>
        <dbReference type="EC" id="5.4.99.25"/>
    </reaction>
</comment>
<comment type="similarity">
    <text evidence="1">Belongs to the pseudouridine synthase TruB family. Type 1 subfamily.</text>
</comment>
<comment type="sequence caution" evidence="2">
    <conflict type="erroneous termination">
        <sequence resource="EMBL-CDS" id="AAP10731"/>
    </conflict>
    <text>Truncated C-terminus.</text>
</comment>
<name>TRUB_BACCR</name>
<gene>
    <name evidence="1" type="primary">truB</name>
    <name type="ordered locus">BC_3808</name>
</gene>
<sequence length="307" mass="34655">MEGVVLLHKPKGMTSHDCVFKLRKILREKRIGHTGTLDPDVTGVLPICVGRATKIAQFLTSETKTYEGEVTLGFSTTTEDASGEVVETKNVDRTITRMEVEKVLAELTGTIEQMPPMFSAVKVNGKKLYEYARAGQEVERPVRTITIHEFVLLDDREVFEGENISFRFRVTCSKGTYVRTLAVMIGEKLGFPSHMSHLVRTASGEFLLEDCISFEEIEENVQNGTVESIFISIDEALSKFPKMVVDEKQAEKIKNGMFLKNELEITAPFITVFDKNDRCLAIYEHHPKHPGMLKPMKVLVNNQELKL</sequence>
<protein>
    <recommendedName>
        <fullName evidence="1">tRNA pseudouridine synthase B</fullName>
        <ecNumber evidence="1">5.4.99.25</ecNumber>
    </recommendedName>
    <alternativeName>
        <fullName evidence="1">tRNA pseudouridine(55) synthase</fullName>
        <shortName evidence="1">Psi55 synthase</shortName>
    </alternativeName>
    <alternativeName>
        <fullName evidence="1">tRNA pseudouridylate synthase</fullName>
    </alternativeName>
    <alternativeName>
        <fullName evidence="1">tRNA-uridine isomerase</fullName>
    </alternativeName>
</protein>
<reference key="1">
    <citation type="journal article" date="2003" name="Nature">
        <title>Genome sequence of Bacillus cereus and comparative analysis with Bacillus anthracis.</title>
        <authorList>
            <person name="Ivanova N."/>
            <person name="Sorokin A."/>
            <person name="Anderson I."/>
            <person name="Galleron N."/>
            <person name="Candelon B."/>
            <person name="Kapatral V."/>
            <person name="Bhattacharyya A."/>
            <person name="Reznik G."/>
            <person name="Mikhailova N."/>
            <person name="Lapidus A."/>
            <person name="Chu L."/>
            <person name="Mazur M."/>
            <person name="Goltsman E."/>
            <person name="Larsen N."/>
            <person name="D'Souza M."/>
            <person name="Walunas T."/>
            <person name="Grechkin Y."/>
            <person name="Pusch G."/>
            <person name="Haselkorn R."/>
            <person name="Fonstein M."/>
            <person name="Ehrlich S.D."/>
            <person name="Overbeek R."/>
            <person name="Kyrpides N.C."/>
        </authorList>
    </citation>
    <scope>NUCLEOTIDE SEQUENCE [LARGE SCALE GENOMIC DNA]</scope>
    <source>
        <strain>ATCC 14579 / DSM 31 / CCUG 7414 / JCM 2152 / NBRC 15305 / NCIMB 9373 / NCTC 2599 / NRRL B-3711</strain>
    </source>
</reference>
<accession>Q812X9</accession>
<dbReference type="EC" id="5.4.99.25" evidence="1"/>
<dbReference type="EMBL" id="AE016877">
    <property type="protein sequence ID" value="AAP10731.1"/>
    <property type="status" value="ALT_SEQ"/>
    <property type="molecule type" value="Genomic_DNA"/>
</dbReference>
<dbReference type="RefSeq" id="NP_833530.1">
    <property type="nucleotide sequence ID" value="NC_004722.1"/>
</dbReference>
<dbReference type="RefSeq" id="WP_000399352.1">
    <property type="nucleotide sequence ID" value="NZ_CP138336.1"/>
</dbReference>
<dbReference type="SMR" id="Q812X9"/>
<dbReference type="STRING" id="226900.BC_3808"/>
<dbReference type="KEGG" id="bce:BC3808"/>
<dbReference type="PATRIC" id="fig|226900.8.peg.3925"/>
<dbReference type="HOGENOM" id="CLU_032087_0_1_9"/>
<dbReference type="OrthoDB" id="9802309at2"/>
<dbReference type="Proteomes" id="UP000001417">
    <property type="component" value="Chromosome"/>
</dbReference>
<dbReference type="GO" id="GO:0009982">
    <property type="term" value="F:pseudouridine synthase activity"/>
    <property type="evidence" value="ECO:0000318"/>
    <property type="project" value="GO_Central"/>
</dbReference>
<dbReference type="GO" id="GO:0003723">
    <property type="term" value="F:RNA binding"/>
    <property type="evidence" value="ECO:0007669"/>
    <property type="project" value="InterPro"/>
</dbReference>
<dbReference type="GO" id="GO:0160148">
    <property type="term" value="F:tRNA pseudouridine(55) synthase activity"/>
    <property type="evidence" value="ECO:0007669"/>
    <property type="project" value="UniProtKB-EC"/>
</dbReference>
<dbReference type="GO" id="GO:1990481">
    <property type="term" value="P:mRNA pseudouridine synthesis"/>
    <property type="evidence" value="ECO:0000318"/>
    <property type="project" value="GO_Central"/>
</dbReference>
<dbReference type="GO" id="GO:0006400">
    <property type="term" value="P:tRNA modification"/>
    <property type="evidence" value="ECO:0000318"/>
    <property type="project" value="GO_Central"/>
</dbReference>
<dbReference type="GO" id="GO:0031119">
    <property type="term" value="P:tRNA pseudouridine synthesis"/>
    <property type="evidence" value="ECO:0007669"/>
    <property type="project" value="UniProtKB-UniRule"/>
</dbReference>
<dbReference type="CDD" id="cd02573">
    <property type="entry name" value="PseudoU_synth_EcTruB"/>
    <property type="match status" value="1"/>
</dbReference>
<dbReference type="FunFam" id="3.30.2350.10:FF:000011">
    <property type="entry name" value="tRNA pseudouridine synthase B"/>
    <property type="match status" value="1"/>
</dbReference>
<dbReference type="Gene3D" id="3.30.2350.10">
    <property type="entry name" value="Pseudouridine synthase"/>
    <property type="match status" value="1"/>
</dbReference>
<dbReference type="HAMAP" id="MF_01080">
    <property type="entry name" value="TruB_bact"/>
    <property type="match status" value="1"/>
</dbReference>
<dbReference type="InterPro" id="IPR020103">
    <property type="entry name" value="PsdUridine_synth_cat_dom_sf"/>
</dbReference>
<dbReference type="InterPro" id="IPR002501">
    <property type="entry name" value="PsdUridine_synth_N"/>
</dbReference>
<dbReference type="InterPro" id="IPR014780">
    <property type="entry name" value="tRNA_psdUridine_synth_TruB"/>
</dbReference>
<dbReference type="InterPro" id="IPR032819">
    <property type="entry name" value="TruB_C"/>
</dbReference>
<dbReference type="NCBIfam" id="TIGR00431">
    <property type="entry name" value="TruB"/>
    <property type="match status" value="1"/>
</dbReference>
<dbReference type="PANTHER" id="PTHR13767:SF2">
    <property type="entry name" value="PSEUDOURIDYLATE SYNTHASE TRUB1"/>
    <property type="match status" value="1"/>
</dbReference>
<dbReference type="PANTHER" id="PTHR13767">
    <property type="entry name" value="TRNA-PSEUDOURIDINE SYNTHASE"/>
    <property type="match status" value="1"/>
</dbReference>
<dbReference type="Pfam" id="PF16198">
    <property type="entry name" value="TruB_C_2"/>
    <property type="match status" value="1"/>
</dbReference>
<dbReference type="Pfam" id="PF01509">
    <property type="entry name" value="TruB_N"/>
    <property type="match status" value="1"/>
</dbReference>
<dbReference type="SUPFAM" id="SSF55120">
    <property type="entry name" value="Pseudouridine synthase"/>
    <property type="match status" value="1"/>
</dbReference>
<organism>
    <name type="scientific">Bacillus cereus (strain ATCC 14579 / DSM 31 / CCUG 7414 / JCM 2152 / NBRC 15305 / NCIMB 9373 / NCTC 2599 / NRRL B-3711)</name>
    <dbReference type="NCBI Taxonomy" id="226900"/>
    <lineage>
        <taxon>Bacteria</taxon>
        <taxon>Bacillati</taxon>
        <taxon>Bacillota</taxon>
        <taxon>Bacilli</taxon>
        <taxon>Bacillales</taxon>
        <taxon>Bacillaceae</taxon>
        <taxon>Bacillus</taxon>
        <taxon>Bacillus cereus group</taxon>
    </lineage>
</organism>
<keyword id="KW-0413">Isomerase</keyword>
<keyword id="KW-1185">Reference proteome</keyword>
<keyword id="KW-0819">tRNA processing</keyword>